<name>SOSSC_DROGR</name>
<gene>
    <name type="ORF">GH17167</name>
</gene>
<comment type="similarity">
    <text evidence="1">Belongs to the SOSS-C family.</text>
</comment>
<sequence>MAFPTSSAQQAETNRKILEEIQTKKQLLIGLGSTTNQMPAPQLLGQPTVTAEFTQGVSVAPNAAGGIAAPRSAFNPTSSTTLGFFIPQDSYFGNSFIPVLPRLEPVPTSSAPNVK</sequence>
<accession>B4J184</accession>
<reference key="1">
    <citation type="journal article" date="2007" name="Nature">
        <title>Evolution of genes and genomes on the Drosophila phylogeny.</title>
        <authorList>
            <consortium name="Drosophila 12 genomes consortium"/>
        </authorList>
    </citation>
    <scope>NUCLEOTIDE SEQUENCE [LARGE SCALE GENOMIC DNA]</scope>
    <source>
        <strain>Tucson 15287-2541.00</strain>
    </source>
</reference>
<evidence type="ECO:0000305" key="1"/>
<feature type="chain" id="PRO_0000385321" description="SOSS complex subunit C homolog">
    <location>
        <begin position="1"/>
        <end position="115"/>
    </location>
</feature>
<dbReference type="EMBL" id="CH916366">
    <property type="protein sequence ID" value="EDV97953.1"/>
    <property type="molecule type" value="Genomic_DNA"/>
</dbReference>
<dbReference type="SMR" id="B4J184"/>
<dbReference type="FunCoup" id="B4J184">
    <property type="interactions" value="410"/>
</dbReference>
<dbReference type="STRING" id="7222.B4J184"/>
<dbReference type="EnsemblMetazoa" id="FBtr0152581">
    <property type="protein sequence ID" value="FBpp0151073"/>
    <property type="gene ID" value="FBgn0124637"/>
</dbReference>
<dbReference type="EnsemblMetazoa" id="XM_001985569.3">
    <property type="protein sequence ID" value="XP_001985605.1"/>
    <property type="gene ID" value="LOC6558103"/>
</dbReference>
<dbReference type="GeneID" id="6558103"/>
<dbReference type="KEGG" id="dgr:6558103"/>
<dbReference type="eggNOG" id="KOG3420">
    <property type="taxonomic scope" value="Eukaryota"/>
</dbReference>
<dbReference type="HOGENOM" id="CLU_145773_0_0_1"/>
<dbReference type="InParanoid" id="B4J184"/>
<dbReference type="OMA" id="VMETQHM"/>
<dbReference type="OrthoDB" id="419617at2759"/>
<dbReference type="PhylomeDB" id="B4J184"/>
<dbReference type="Proteomes" id="UP000001070">
    <property type="component" value="Unassembled WGS sequence"/>
</dbReference>
<dbReference type="GO" id="GO:0005654">
    <property type="term" value="C:nucleoplasm"/>
    <property type="evidence" value="ECO:0007669"/>
    <property type="project" value="TreeGrafter"/>
</dbReference>
<dbReference type="GO" id="GO:0070876">
    <property type="term" value="C:SOSS complex"/>
    <property type="evidence" value="ECO:0007669"/>
    <property type="project" value="InterPro"/>
</dbReference>
<dbReference type="GO" id="GO:0006281">
    <property type="term" value="P:DNA repair"/>
    <property type="evidence" value="ECO:0007669"/>
    <property type="project" value="InterPro"/>
</dbReference>
<dbReference type="InterPro" id="IPR031821">
    <property type="entry name" value="SOSSC"/>
</dbReference>
<dbReference type="PANTHER" id="PTHR31526">
    <property type="entry name" value="SOSS COMPLEX SUBUNIT C"/>
    <property type="match status" value="1"/>
</dbReference>
<dbReference type="PANTHER" id="PTHR31526:SF2">
    <property type="entry name" value="SOSS COMPLEX SUBUNIT C"/>
    <property type="match status" value="1"/>
</dbReference>
<dbReference type="Pfam" id="PF15925">
    <property type="entry name" value="SOSSC"/>
    <property type="match status" value="1"/>
</dbReference>
<proteinExistence type="inferred from homology"/>
<keyword id="KW-1185">Reference proteome</keyword>
<organism>
    <name type="scientific">Drosophila grimshawi</name>
    <name type="common">Hawaiian fruit fly</name>
    <name type="synonym">Idiomyia grimshawi</name>
    <dbReference type="NCBI Taxonomy" id="7222"/>
    <lineage>
        <taxon>Eukaryota</taxon>
        <taxon>Metazoa</taxon>
        <taxon>Ecdysozoa</taxon>
        <taxon>Arthropoda</taxon>
        <taxon>Hexapoda</taxon>
        <taxon>Insecta</taxon>
        <taxon>Pterygota</taxon>
        <taxon>Neoptera</taxon>
        <taxon>Endopterygota</taxon>
        <taxon>Diptera</taxon>
        <taxon>Brachycera</taxon>
        <taxon>Muscomorpha</taxon>
        <taxon>Ephydroidea</taxon>
        <taxon>Drosophilidae</taxon>
        <taxon>Drosophila</taxon>
        <taxon>Hawaiian Drosophila</taxon>
    </lineage>
</organism>
<protein>
    <recommendedName>
        <fullName>SOSS complex subunit C homolog</fullName>
    </recommendedName>
</protein>